<reference key="1">
    <citation type="journal article" date="2005" name="Nucleic Acids Res.">
        <title>Genome dynamics and diversity of Shigella species, the etiologic agents of bacillary dysentery.</title>
        <authorList>
            <person name="Yang F."/>
            <person name="Yang J."/>
            <person name="Zhang X."/>
            <person name="Chen L."/>
            <person name="Jiang Y."/>
            <person name="Yan Y."/>
            <person name="Tang X."/>
            <person name="Wang J."/>
            <person name="Xiong Z."/>
            <person name="Dong J."/>
            <person name="Xue Y."/>
            <person name="Zhu Y."/>
            <person name="Xu X."/>
            <person name="Sun L."/>
            <person name="Chen S."/>
            <person name="Nie H."/>
            <person name="Peng J."/>
            <person name="Xu J."/>
            <person name="Wang Y."/>
            <person name="Yuan Z."/>
            <person name="Wen Y."/>
            <person name="Yao Z."/>
            <person name="Shen Y."/>
            <person name="Qiang B."/>
            <person name="Hou Y."/>
            <person name="Yu J."/>
            <person name="Jin Q."/>
        </authorList>
    </citation>
    <scope>NUCLEOTIDE SEQUENCE [LARGE SCALE GENOMIC DNA]</scope>
    <source>
        <strain>Sb227</strain>
    </source>
</reference>
<accession>Q31SV7</accession>
<sequence length="440" mass="47150">MFLAQEIIRKKRDGHALSDEEIRFFINGIRDNTISEGQIAALAMTIFFHDMTMPERVSLTMAMRDSGTVLDWKSLHLNGPIVDKHSTGGVGDVTSLMLGPMVAACGGYIPMISGRGLGHTGGTLDKLESIPGFDIFPDDNRFREIIKDVGVAIIGQTSSLAPADKRFYATRDITATVDSIPLITASILAKKLAEGLDALVMDVKVGSGAFMPTYELSEALAEAIVGVANGAGVRTTALLTDMNQVLASSAGNAVEVREAVQFLTGEYRNPRLFDVTMALCVEMLISGKLAKDDAEARAKLQAVLDNGKAAEVFGRMVAAQKGPTDFVENYAKYLPTAMLTKAVYADTEGFVSEMDARALGMAVVAMGGGRRQASDTIDYSVGFTDMARLGDQVDGQRPLAVIHAKDENSWQEAAKAVKAAIKLADKAPESTPTVYRRISE</sequence>
<name>TYPH_SHIBS</name>
<evidence type="ECO:0000255" key="1">
    <source>
        <dbReference type="HAMAP-Rule" id="MF_01628"/>
    </source>
</evidence>
<gene>
    <name evidence="1" type="primary">deoA</name>
    <name type="ordered locus">SBO_4444</name>
</gene>
<protein>
    <recommendedName>
        <fullName evidence="1">Thymidine phosphorylase</fullName>
        <ecNumber evidence="1">2.4.2.4</ecNumber>
    </recommendedName>
    <alternativeName>
        <fullName evidence="1">TdRPase</fullName>
    </alternativeName>
</protein>
<comment type="function">
    <text evidence="1">The enzymes which catalyze the reversible phosphorolysis of pyrimidine nucleosides are involved in the degradation of these compounds and in their utilization as carbon and energy sources, or in the rescue of pyrimidine bases for nucleotide synthesis.</text>
</comment>
<comment type="catalytic activity">
    <reaction evidence="1">
        <text>thymidine + phosphate = 2-deoxy-alpha-D-ribose 1-phosphate + thymine</text>
        <dbReference type="Rhea" id="RHEA:16037"/>
        <dbReference type="ChEBI" id="CHEBI:17748"/>
        <dbReference type="ChEBI" id="CHEBI:17821"/>
        <dbReference type="ChEBI" id="CHEBI:43474"/>
        <dbReference type="ChEBI" id="CHEBI:57259"/>
        <dbReference type="EC" id="2.4.2.4"/>
    </reaction>
</comment>
<comment type="pathway">
    <text evidence="1">Pyrimidine metabolism; dTMP biosynthesis via salvage pathway; dTMP from thymine: step 1/2.</text>
</comment>
<comment type="subunit">
    <text evidence="1">Homodimer.</text>
</comment>
<comment type="similarity">
    <text evidence="1">Belongs to the thymidine/pyrimidine-nucleoside phosphorylase family.</text>
</comment>
<keyword id="KW-0328">Glycosyltransferase</keyword>
<keyword id="KW-0808">Transferase</keyword>
<organism>
    <name type="scientific">Shigella boydii serotype 4 (strain Sb227)</name>
    <dbReference type="NCBI Taxonomy" id="300268"/>
    <lineage>
        <taxon>Bacteria</taxon>
        <taxon>Pseudomonadati</taxon>
        <taxon>Pseudomonadota</taxon>
        <taxon>Gammaproteobacteria</taxon>
        <taxon>Enterobacterales</taxon>
        <taxon>Enterobacteriaceae</taxon>
        <taxon>Shigella</taxon>
    </lineage>
</organism>
<feature type="chain" id="PRO_0000059066" description="Thymidine phosphorylase">
    <location>
        <begin position="1"/>
        <end position="440"/>
    </location>
</feature>
<proteinExistence type="inferred from homology"/>
<dbReference type="EC" id="2.4.2.4" evidence="1"/>
<dbReference type="EMBL" id="CP000036">
    <property type="protein sequence ID" value="ABB68851.1"/>
    <property type="molecule type" value="Genomic_DNA"/>
</dbReference>
<dbReference type="RefSeq" id="WP_000477803.1">
    <property type="nucleotide sequence ID" value="NC_007613.1"/>
</dbReference>
<dbReference type="SMR" id="Q31SV7"/>
<dbReference type="KEGG" id="sbo:SBO_4444"/>
<dbReference type="HOGENOM" id="CLU_025040_0_1_6"/>
<dbReference type="UniPathway" id="UPA00578">
    <property type="reaction ID" value="UER00638"/>
</dbReference>
<dbReference type="Proteomes" id="UP000007067">
    <property type="component" value="Chromosome"/>
</dbReference>
<dbReference type="GO" id="GO:0005829">
    <property type="term" value="C:cytosol"/>
    <property type="evidence" value="ECO:0007669"/>
    <property type="project" value="TreeGrafter"/>
</dbReference>
<dbReference type="GO" id="GO:0004645">
    <property type="term" value="F:1,4-alpha-oligoglucan phosphorylase activity"/>
    <property type="evidence" value="ECO:0007669"/>
    <property type="project" value="InterPro"/>
</dbReference>
<dbReference type="GO" id="GO:0009032">
    <property type="term" value="F:thymidine phosphorylase activity"/>
    <property type="evidence" value="ECO:0007669"/>
    <property type="project" value="UniProtKB-UniRule"/>
</dbReference>
<dbReference type="GO" id="GO:0006206">
    <property type="term" value="P:pyrimidine nucleobase metabolic process"/>
    <property type="evidence" value="ECO:0007669"/>
    <property type="project" value="InterPro"/>
</dbReference>
<dbReference type="GO" id="GO:0046104">
    <property type="term" value="P:thymidine metabolic process"/>
    <property type="evidence" value="ECO:0007669"/>
    <property type="project" value="UniProtKB-UniRule"/>
</dbReference>
<dbReference type="FunFam" id="3.40.1030.10:FF:000001">
    <property type="entry name" value="Thymidine phosphorylase"/>
    <property type="match status" value="1"/>
</dbReference>
<dbReference type="FunFam" id="3.90.1170.30:FF:000001">
    <property type="entry name" value="Thymidine phosphorylase"/>
    <property type="match status" value="1"/>
</dbReference>
<dbReference type="Gene3D" id="3.40.1030.10">
    <property type="entry name" value="Nucleoside phosphorylase/phosphoribosyltransferase catalytic domain"/>
    <property type="match status" value="1"/>
</dbReference>
<dbReference type="Gene3D" id="3.90.1170.30">
    <property type="entry name" value="Pyrimidine nucleoside phosphorylase-like, C-terminal domain"/>
    <property type="match status" value="1"/>
</dbReference>
<dbReference type="Gene3D" id="1.20.970.10">
    <property type="entry name" value="Transferase, Pyrimidine Nucleoside Phosphorylase, Chain C"/>
    <property type="match status" value="1"/>
</dbReference>
<dbReference type="HAMAP" id="MF_01628">
    <property type="entry name" value="Thymid_phosp"/>
    <property type="match status" value="1"/>
</dbReference>
<dbReference type="InterPro" id="IPR000312">
    <property type="entry name" value="Glycosyl_Trfase_fam3"/>
</dbReference>
<dbReference type="InterPro" id="IPR017459">
    <property type="entry name" value="Glycosyl_Trfase_fam3_N_dom"/>
</dbReference>
<dbReference type="InterPro" id="IPR036320">
    <property type="entry name" value="Glycosyl_Trfase_fam3_N_dom_sf"/>
</dbReference>
<dbReference type="InterPro" id="IPR035902">
    <property type="entry name" value="Nuc_phospho_transferase"/>
</dbReference>
<dbReference type="InterPro" id="IPR036566">
    <property type="entry name" value="PYNP-like_C_sf"/>
</dbReference>
<dbReference type="InterPro" id="IPR013102">
    <property type="entry name" value="PYNP_C"/>
</dbReference>
<dbReference type="InterPro" id="IPR018090">
    <property type="entry name" value="Pyrmidine_PPas_bac/euk"/>
</dbReference>
<dbReference type="InterPro" id="IPR017872">
    <property type="entry name" value="Pyrmidine_PPase_CS"/>
</dbReference>
<dbReference type="InterPro" id="IPR000053">
    <property type="entry name" value="Thymidine/pyrmidine_PPase"/>
</dbReference>
<dbReference type="InterPro" id="IPR013465">
    <property type="entry name" value="Thymidine_Pase"/>
</dbReference>
<dbReference type="NCBIfam" id="NF004490">
    <property type="entry name" value="PRK05820.1"/>
    <property type="match status" value="1"/>
</dbReference>
<dbReference type="NCBIfam" id="TIGR02643">
    <property type="entry name" value="T_phosphoryl"/>
    <property type="match status" value="1"/>
</dbReference>
<dbReference type="NCBIfam" id="TIGR02644">
    <property type="entry name" value="Y_phosphoryl"/>
    <property type="match status" value="1"/>
</dbReference>
<dbReference type="PANTHER" id="PTHR10515">
    <property type="entry name" value="THYMIDINE PHOSPHORYLASE"/>
    <property type="match status" value="1"/>
</dbReference>
<dbReference type="PANTHER" id="PTHR10515:SF0">
    <property type="entry name" value="THYMIDINE PHOSPHORYLASE"/>
    <property type="match status" value="1"/>
</dbReference>
<dbReference type="Pfam" id="PF02885">
    <property type="entry name" value="Glycos_trans_3N"/>
    <property type="match status" value="1"/>
</dbReference>
<dbReference type="Pfam" id="PF00591">
    <property type="entry name" value="Glycos_transf_3"/>
    <property type="match status" value="1"/>
</dbReference>
<dbReference type="Pfam" id="PF07831">
    <property type="entry name" value="PYNP_C"/>
    <property type="match status" value="1"/>
</dbReference>
<dbReference type="PIRSF" id="PIRSF000478">
    <property type="entry name" value="TP_PyNP"/>
    <property type="match status" value="1"/>
</dbReference>
<dbReference type="SMART" id="SM00941">
    <property type="entry name" value="PYNP_C"/>
    <property type="match status" value="1"/>
</dbReference>
<dbReference type="SUPFAM" id="SSF52418">
    <property type="entry name" value="Nucleoside phosphorylase/phosphoribosyltransferase catalytic domain"/>
    <property type="match status" value="1"/>
</dbReference>
<dbReference type="SUPFAM" id="SSF47648">
    <property type="entry name" value="Nucleoside phosphorylase/phosphoribosyltransferase N-terminal domain"/>
    <property type="match status" value="1"/>
</dbReference>
<dbReference type="SUPFAM" id="SSF54680">
    <property type="entry name" value="Pyrimidine nucleoside phosphorylase C-terminal domain"/>
    <property type="match status" value="1"/>
</dbReference>
<dbReference type="PROSITE" id="PS00647">
    <property type="entry name" value="THYMID_PHOSPHORYLASE"/>
    <property type="match status" value="1"/>
</dbReference>